<accession>A9KBJ2</accession>
<name>SYC_COXBN</name>
<comment type="catalytic activity">
    <reaction evidence="1">
        <text>tRNA(Cys) + L-cysteine + ATP = L-cysteinyl-tRNA(Cys) + AMP + diphosphate</text>
        <dbReference type="Rhea" id="RHEA:17773"/>
        <dbReference type="Rhea" id="RHEA-COMP:9661"/>
        <dbReference type="Rhea" id="RHEA-COMP:9679"/>
        <dbReference type="ChEBI" id="CHEBI:30616"/>
        <dbReference type="ChEBI" id="CHEBI:33019"/>
        <dbReference type="ChEBI" id="CHEBI:35235"/>
        <dbReference type="ChEBI" id="CHEBI:78442"/>
        <dbReference type="ChEBI" id="CHEBI:78517"/>
        <dbReference type="ChEBI" id="CHEBI:456215"/>
        <dbReference type="EC" id="6.1.1.16"/>
    </reaction>
</comment>
<comment type="cofactor">
    <cofactor evidence="1">
        <name>Zn(2+)</name>
        <dbReference type="ChEBI" id="CHEBI:29105"/>
    </cofactor>
    <text evidence="1">Binds 1 zinc ion per subunit.</text>
</comment>
<comment type="subunit">
    <text evidence="1">Monomer.</text>
</comment>
<comment type="subcellular location">
    <subcellularLocation>
        <location evidence="1">Cytoplasm</location>
    </subcellularLocation>
</comment>
<comment type="similarity">
    <text evidence="1">Belongs to the class-I aminoacyl-tRNA synthetase family.</text>
</comment>
<comment type="sequence caution" evidence="2">
    <conflict type="erroneous initiation">
        <sequence resource="EMBL-CDS" id="ABS78112"/>
    </conflict>
</comment>
<evidence type="ECO:0000255" key="1">
    <source>
        <dbReference type="HAMAP-Rule" id="MF_00041"/>
    </source>
</evidence>
<evidence type="ECO:0000305" key="2"/>
<protein>
    <recommendedName>
        <fullName evidence="1">Cysteine--tRNA ligase</fullName>
        <ecNumber evidence="1">6.1.1.16</ecNumber>
    </recommendedName>
    <alternativeName>
        <fullName evidence="1">Cysteinyl-tRNA synthetase</fullName>
        <shortName evidence="1">CysRS</shortName>
    </alternativeName>
</protein>
<dbReference type="EC" id="6.1.1.16" evidence="1"/>
<dbReference type="EMBL" id="CP000733">
    <property type="protein sequence ID" value="ABS78112.2"/>
    <property type="status" value="ALT_INIT"/>
    <property type="molecule type" value="Genomic_DNA"/>
</dbReference>
<dbReference type="SMR" id="A9KBJ2"/>
<dbReference type="KEGG" id="cbd:CBUD_0530"/>
<dbReference type="HOGENOM" id="CLU_013528_0_1_6"/>
<dbReference type="Proteomes" id="UP000008555">
    <property type="component" value="Chromosome"/>
</dbReference>
<dbReference type="GO" id="GO:0005829">
    <property type="term" value="C:cytosol"/>
    <property type="evidence" value="ECO:0007669"/>
    <property type="project" value="TreeGrafter"/>
</dbReference>
<dbReference type="GO" id="GO:0005524">
    <property type="term" value="F:ATP binding"/>
    <property type="evidence" value="ECO:0007669"/>
    <property type="project" value="UniProtKB-UniRule"/>
</dbReference>
<dbReference type="GO" id="GO:0004817">
    <property type="term" value="F:cysteine-tRNA ligase activity"/>
    <property type="evidence" value="ECO:0007669"/>
    <property type="project" value="UniProtKB-UniRule"/>
</dbReference>
<dbReference type="GO" id="GO:0008270">
    <property type="term" value="F:zinc ion binding"/>
    <property type="evidence" value="ECO:0007669"/>
    <property type="project" value="UniProtKB-UniRule"/>
</dbReference>
<dbReference type="GO" id="GO:0006423">
    <property type="term" value="P:cysteinyl-tRNA aminoacylation"/>
    <property type="evidence" value="ECO:0007669"/>
    <property type="project" value="UniProtKB-UniRule"/>
</dbReference>
<dbReference type="CDD" id="cd07963">
    <property type="entry name" value="Anticodon_Ia_Cys"/>
    <property type="match status" value="1"/>
</dbReference>
<dbReference type="CDD" id="cd00672">
    <property type="entry name" value="CysRS_core"/>
    <property type="match status" value="1"/>
</dbReference>
<dbReference type="FunFam" id="3.40.50.620:FF:000009">
    <property type="entry name" value="Cysteine--tRNA ligase"/>
    <property type="match status" value="1"/>
</dbReference>
<dbReference type="Gene3D" id="1.20.120.1910">
    <property type="entry name" value="Cysteine-tRNA ligase, C-terminal anti-codon recognition domain"/>
    <property type="match status" value="1"/>
</dbReference>
<dbReference type="Gene3D" id="3.40.50.620">
    <property type="entry name" value="HUPs"/>
    <property type="match status" value="1"/>
</dbReference>
<dbReference type="HAMAP" id="MF_00041">
    <property type="entry name" value="Cys_tRNA_synth"/>
    <property type="match status" value="1"/>
</dbReference>
<dbReference type="InterPro" id="IPR015803">
    <property type="entry name" value="Cys-tRNA-ligase"/>
</dbReference>
<dbReference type="InterPro" id="IPR015273">
    <property type="entry name" value="Cys-tRNA-synt_Ia_DALR"/>
</dbReference>
<dbReference type="InterPro" id="IPR024909">
    <property type="entry name" value="Cys-tRNA/MSH_ligase"/>
</dbReference>
<dbReference type="InterPro" id="IPR056411">
    <property type="entry name" value="CysS_C"/>
</dbReference>
<dbReference type="InterPro" id="IPR014729">
    <property type="entry name" value="Rossmann-like_a/b/a_fold"/>
</dbReference>
<dbReference type="InterPro" id="IPR032678">
    <property type="entry name" value="tRNA-synt_1_cat_dom"/>
</dbReference>
<dbReference type="InterPro" id="IPR009080">
    <property type="entry name" value="tRNAsynth_Ia_anticodon-bd"/>
</dbReference>
<dbReference type="NCBIfam" id="TIGR00435">
    <property type="entry name" value="cysS"/>
    <property type="match status" value="1"/>
</dbReference>
<dbReference type="PANTHER" id="PTHR10890:SF3">
    <property type="entry name" value="CYSTEINE--TRNA LIGASE, CYTOPLASMIC"/>
    <property type="match status" value="1"/>
</dbReference>
<dbReference type="PANTHER" id="PTHR10890">
    <property type="entry name" value="CYSTEINYL-TRNA SYNTHETASE"/>
    <property type="match status" value="1"/>
</dbReference>
<dbReference type="Pfam" id="PF23493">
    <property type="entry name" value="CysS_C"/>
    <property type="match status" value="1"/>
</dbReference>
<dbReference type="Pfam" id="PF09190">
    <property type="entry name" value="DALR_2"/>
    <property type="match status" value="1"/>
</dbReference>
<dbReference type="Pfam" id="PF01406">
    <property type="entry name" value="tRNA-synt_1e"/>
    <property type="match status" value="1"/>
</dbReference>
<dbReference type="PRINTS" id="PR00983">
    <property type="entry name" value="TRNASYNTHCYS"/>
</dbReference>
<dbReference type="SMART" id="SM00840">
    <property type="entry name" value="DALR_2"/>
    <property type="match status" value="1"/>
</dbReference>
<dbReference type="SUPFAM" id="SSF47323">
    <property type="entry name" value="Anticodon-binding domain of a subclass of class I aminoacyl-tRNA synthetases"/>
    <property type="match status" value="1"/>
</dbReference>
<dbReference type="SUPFAM" id="SSF52374">
    <property type="entry name" value="Nucleotidylyl transferase"/>
    <property type="match status" value="1"/>
</dbReference>
<proteinExistence type="inferred from homology"/>
<feature type="chain" id="PRO_0000332810" description="Cysteine--tRNA ligase">
    <location>
        <begin position="1"/>
        <end position="458"/>
    </location>
</feature>
<feature type="short sequence motif" description="'HIGH' region">
    <location>
        <begin position="29"/>
        <end position="39"/>
    </location>
</feature>
<feature type="short sequence motif" description="'KMSKS' region">
    <location>
        <begin position="265"/>
        <end position="269"/>
    </location>
</feature>
<feature type="binding site" evidence="1">
    <location>
        <position position="27"/>
    </location>
    <ligand>
        <name>Zn(2+)</name>
        <dbReference type="ChEBI" id="CHEBI:29105"/>
    </ligand>
</feature>
<feature type="binding site" evidence="1">
    <location>
        <position position="208"/>
    </location>
    <ligand>
        <name>Zn(2+)</name>
        <dbReference type="ChEBI" id="CHEBI:29105"/>
    </ligand>
</feature>
<feature type="binding site" evidence="1">
    <location>
        <position position="233"/>
    </location>
    <ligand>
        <name>Zn(2+)</name>
        <dbReference type="ChEBI" id="CHEBI:29105"/>
    </ligand>
</feature>
<feature type="binding site" evidence="1">
    <location>
        <position position="237"/>
    </location>
    <ligand>
        <name>Zn(2+)</name>
        <dbReference type="ChEBI" id="CHEBI:29105"/>
    </ligand>
</feature>
<feature type="binding site" evidence="1">
    <location>
        <position position="268"/>
    </location>
    <ligand>
        <name>ATP</name>
        <dbReference type="ChEBI" id="CHEBI:30616"/>
    </ligand>
</feature>
<organism>
    <name type="scientific">Coxiella burnetii (strain Dugway 5J108-111)</name>
    <dbReference type="NCBI Taxonomy" id="434922"/>
    <lineage>
        <taxon>Bacteria</taxon>
        <taxon>Pseudomonadati</taxon>
        <taxon>Pseudomonadota</taxon>
        <taxon>Gammaproteobacteria</taxon>
        <taxon>Legionellales</taxon>
        <taxon>Coxiellaceae</taxon>
        <taxon>Coxiella</taxon>
    </lineage>
</organism>
<gene>
    <name evidence="1" type="primary">cysS</name>
    <name type="ordered locus">CBUD_0530</name>
</gene>
<reference key="1">
    <citation type="journal article" date="2009" name="Infect. Immun.">
        <title>Comparative genomics reveal extensive transposon-mediated genomic plasticity and diversity among potential effector proteins within the genus Coxiella.</title>
        <authorList>
            <person name="Beare P.A."/>
            <person name="Unsworth N."/>
            <person name="Andoh M."/>
            <person name="Voth D.E."/>
            <person name="Omsland A."/>
            <person name="Gilk S.D."/>
            <person name="Williams K.P."/>
            <person name="Sobral B.W."/>
            <person name="Kupko J.J. III"/>
            <person name="Porcella S.F."/>
            <person name="Samuel J.E."/>
            <person name="Heinzen R.A."/>
        </authorList>
    </citation>
    <scope>NUCLEOTIDE SEQUENCE [LARGE SCALE GENOMIC DNA]</scope>
    <source>
        <strain>Dugway 5J108-111</strain>
    </source>
</reference>
<sequence>MKIFNSLTKQKEIFKPIESGKVKLYVCGMTVYDYMHIGHGRSWIIFDMVVRYLRMRGYEVTFVRNITDIDDKIIKRAGENKESPAALAERFIQILHEDEKALRVLSPDQEPRATQYVPEIIKLIQKLLDNQYAYTGQNGDVFFDVRRFKDYGKLSHRHLDELQAGARVEVSDSKRDPLDFVLWKKAKPGEPKWDSPWGEGRPGWHIECSAMSSSILGQPFDIHGGGLDLKFPHHENEIAQSEAGEEKPFVKLWMHAGLLEINKEKMSKSLGNIISIREALKESDVEVLRYFLLSGHYRNPLSYSKENLENGRLALERFYLALRGLPVVNHEKTSSYTDRFYEAMDDDFNTPIAFALLFEMVREINRFRDNNQIEKAAVLAAELKCLGNIFGLLQYSPEQFLQGAKKEADVQEIKKLIDQRNEARAKKDWKTADQIRDQLTDLGVAIEDSSDGTSWRQE</sequence>
<keyword id="KW-0030">Aminoacyl-tRNA synthetase</keyword>
<keyword id="KW-0067">ATP-binding</keyword>
<keyword id="KW-0963">Cytoplasm</keyword>
<keyword id="KW-0436">Ligase</keyword>
<keyword id="KW-0479">Metal-binding</keyword>
<keyword id="KW-0547">Nucleotide-binding</keyword>
<keyword id="KW-0648">Protein biosynthesis</keyword>
<keyword id="KW-0862">Zinc</keyword>